<comment type="function">
    <text evidence="1">Carboxylate--CoA ligase that may use 4-coumarate as substrate. Follows a two-step reaction mechanism, wherein the carboxylate substrate first undergoes adenylation by ATP, followed by a thioesterification in the presence of CoA to yield the final CoA thioester.</text>
</comment>
<comment type="catalytic activity">
    <reaction evidence="1">
        <text>(E)-4-coumarate + ATP + CoA = (E)-4-coumaroyl-CoA + AMP + diphosphate</text>
        <dbReference type="Rhea" id="RHEA:19641"/>
        <dbReference type="ChEBI" id="CHEBI:12876"/>
        <dbReference type="ChEBI" id="CHEBI:30616"/>
        <dbReference type="ChEBI" id="CHEBI:33019"/>
        <dbReference type="ChEBI" id="CHEBI:57287"/>
        <dbReference type="ChEBI" id="CHEBI:85008"/>
        <dbReference type="ChEBI" id="CHEBI:456215"/>
        <dbReference type="EC" id="6.2.1.12"/>
    </reaction>
    <physiologicalReaction direction="left-to-right" evidence="1">
        <dbReference type="Rhea" id="RHEA:19642"/>
    </physiologicalReaction>
</comment>
<comment type="catalytic activity">
    <reaction evidence="1">
        <text>(E)-4-coumarate + ATP + H(+) = (E)-4-coumaroyl-AMP + diphosphate</text>
        <dbReference type="Rhea" id="RHEA:72419"/>
        <dbReference type="ChEBI" id="CHEBI:12876"/>
        <dbReference type="ChEBI" id="CHEBI:15378"/>
        <dbReference type="ChEBI" id="CHEBI:30616"/>
        <dbReference type="ChEBI" id="CHEBI:33019"/>
        <dbReference type="ChEBI" id="CHEBI:192348"/>
    </reaction>
    <physiologicalReaction direction="left-to-right" evidence="1">
        <dbReference type="Rhea" id="RHEA:72420"/>
    </physiologicalReaction>
</comment>
<comment type="catalytic activity">
    <reaction evidence="1">
        <text>(E)-4-coumaroyl-AMP + CoA = (E)-4-coumaroyl-CoA + AMP + H(+)</text>
        <dbReference type="Rhea" id="RHEA:72423"/>
        <dbReference type="ChEBI" id="CHEBI:15378"/>
        <dbReference type="ChEBI" id="CHEBI:57287"/>
        <dbReference type="ChEBI" id="CHEBI:85008"/>
        <dbReference type="ChEBI" id="CHEBI:192348"/>
        <dbReference type="ChEBI" id="CHEBI:456215"/>
    </reaction>
    <physiologicalReaction direction="left-to-right" evidence="1">
        <dbReference type="Rhea" id="RHEA:72424"/>
    </physiologicalReaction>
</comment>
<comment type="cofactor">
    <cofactor evidence="1">
        <name>Mg(2+)</name>
        <dbReference type="ChEBI" id="CHEBI:18420"/>
    </cofactor>
</comment>
<comment type="domain">
    <text evidence="2">Both substrate-binding domains (SBD1 and SBD2) are involved in the substrate recognition, and are sufficient to confer the substrate specificity.</text>
</comment>
<comment type="similarity">
    <text evidence="3">Belongs to the ATP-dependent AMP-binding enzyme family.</text>
</comment>
<comment type="sequence caution" evidence="3">
    <conflict type="erroneous gene model prediction">
        <sequence resource="EMBL-CDS" id="BAB89961"/>
    </conflict>
</comment>
<comment type="sequence caution" evidence="3">
    <conflict type="erroneous gene model prediction">
        <sequence resource="EMBL-CDS" id="BAB90528"/>
    </conflict>
</comment>
<comment type="sequence caution" evidence="3">
    <conflict type="erroneous gene model prediction">
        <sequence resource="EMBL-CDS" id="BAD82770"/>
    </conflict>
</comment>
<reference key="1">
    <citation type="journal article" date="2002" name="Nature">
        <title>The genome sequence and structure of rice chromosome 1.</title>
        <authorList>
            <person name="Sasaki T."/>
            <person name="Matsumoto T."/>
            <person name="Yamamoto K."/>
            <person name="Sakata K."/>
            <person name="Baba T."/>
            <person name="Katayose Y."/>
            <person name="Wu J."/>
            <person name="Niimura Y."/>
            <person name="Cheng Z."/>
            <person name="Nagamura Y."/>
            <person name="Antonio B.A."/>
            <person name="Kanamori H."/>
            <person name="Hosokawa S."/>
            <person name="Masukawa M."/>
            <person name="Arikawa K."/>
            <person name="Chiden Y."/>
            <person name="Hayashi M."/>
            <person name="Okamoto M."/>
            <person name="Ando T."/>
            <person name="Aoki H."/>
            <person name="Arita K."/>
            <person name="Hamada M."/>
            <person name="Harada C."/>
            <person name="Hijishita S."/>
            <person name="Honda M."/>
            <person name="Ichikawa Y."/>
            <person name="Idonuma A."/>
            <person name="Iijima M."/>
            <person name="Ikeda M."/>
            <person name="Ikeno M."/>
            <person name="Ito S."/>
            <person name="Ito T."/>
            <person name="Ito Y."/>
            <person name="Ito Y."/>
            <person name="Iwabuchi A."/>
            <person name="Kamiya K."/>
            <person name="Karasawa W."/>
            <person name="Katagiri S."/>
            <person name="Kikuta A."/>
            <person name="Kobayashi N."/>
            <person name="Kono I."/>
            <person name="Machita K."/>
            <person name="Maehara T."/>
            <person name="Mizuno H."/>
            <person name="Mizubayashi T."/>
            <person name="Mukai Y."/>
            <person name="Nagasaki H."/>
            <person name="Nakashima M."/>
            <person name="Nakama Y."/>
            <person name="Nakamichi Y."/>
            <person name="Nakamura M."/>
            <person name="Namiki N."/>
            <person name="Negishi M."/>
            <person name="Ohta I."/>
            <person name="Ono N."/>
            <person name="Saji S."/>
            <person name="Sakai K."/>
            <person name="Shibata M."/>
            <person name="Shimokawa T."/>
            <person name="Shomura A."/>
            <person name="Song J."/>
            <person name="Takazaki Y."/>
            <person name="Terasawa K."/>
            <person name="Tsuji K."/>
            <person name="Waki K."/>
            <person name="Yamagata H."/>
            <person name="Yamane H."/>
            <person name="Yoshiki S."/>
            <person name="Yoshihara R."/>
            <person name="Yukawa K."/>
            <person name="Zhong H."/>
            <person name="Iwama H."/>
            <person name="Endo T."/>
            <person name="Ito H."/>
            <person name="Hahn J.H."/>
            <person name="Kim H.-I."/>
            <person name="Eun M.-Y."/>
            <person name="Yano M."/>
            <person name="Jiang J."/>
            <person name="Gojobori T."/>
        </authorList>
    </citation>
    <scope>NUCLEOTIDE SEQUENCE [LARGE SCALE GENOMIC DNA]</scope>
    <source>
        <strain>cv. Nipponbare</strain>
    </source>
</reference>
<reference key="2">
    <citation type="journal article" date="2005" name="Nature">
        <title>The map-based sequence of the rice genome.</title>
        <authorList>
            <consortium name="International rice genome sequencing project (IRGSP)"/>
        </authorList>
    </citation>
    <scope>NUCLEOTIDE SEQUENCE [LARGE SCALE GENOMIC DNA]</scope>
    <source>
        <strain>cv. Nipponbare</strain>
    </source>
</reference>
<reference key="3">
    <citation type="journal article" date="2013" name="Rice">
        <title>Improvement of the Oryza sativa Nipponbare reference genome using next generation sequence and optical map data.</title>
        <authorList>
            <person name="Kawahara Y."/>
            <person name="de la Bastide M."/>
            <person name="Hamilton J.P."/>
            <person name="Kanamori H."/>
            <person name="McCombie W.R."/>
            <person name="Ouyang S."/>
            <person name="Schwartz D.C."/>
            <person name="Tanaka T."/>
            <person name="Wu J."/>
            <person name="Zhou S."/>
            <person name="Childs K.L."/>
            <person name="Davidson R.M."/>
            <person name="Lin H."/>
            <person name="Quesada-Ocampo L."/>
            <person name="Vaillancourt B."/>
            <person name="Sakai H."/>
            <person name="Lee S.S."/>
            <person name="Kim J."/>
            <person name="Numa H."/>
            <person name="Itoh T."/>
            <person name="Buell C.R."/>
            <person name="Matsumoto T."/>
        </authorList>
    </citation>
    <scope>GENOME REANNOTATION</scope>
    <source>
        <strain>cv. Nipponbare</strain>
    </source>
</reference>
<reference key="4">
    <citation type="submission" date="2006-10" db="EMBL/GenBank/DDBJ databases">
        <title>Oryza sativa full length cDNA.</title>
        <authorList>
            <consortium name="The rice full-length cDNA consortium"/>
        </authorList>
    </citation>
    <scope>NUCLEOTIDE SEQUENCE [LARGE SCALE MRNA]</scope>
    <source>
        <strain>cv. Nipponbare</strain>
    </source>
</reference>
<reference key="5">
    <citation type="journal article" date="2008" name="New Phytol.">
        <title>Genome-wide analysis of a land plant-specific acyl:coenzyme A synthetase (ACS) gene family in Arabidopsis, poplar, rice and Physcomitrella.</title>
        <authorList>
            <person name="de Azevedo Souza C."/>
            <person name="Barbazuk B."/>
            <person name="Ralph S.G."/>
            <person name="Bohlmann J."/>
            <person name="Hamberger B."/>
            <person name="Douglas C.J."/>
        </authorList>
    </citation>
    <scope>GENE FAMILY</scope>
</reference>
<sequence>MSKRSPPPQPAHIPMAEQRWRPPYPYASSAAGGGGVDRRSRSGFCAATRTFHSLRSVGPLPPEELPLTVAAYAFSLLSSAPPLVVAGRGPALVDAATGIAVSYPAFVARVRFLAGGLWCSLGLRPGDVALVVSPSCLDVAVLYFALMSIGVVVSPANPASTADEYAHQVRLSRPAIAFVAPEVAARLPRHVSRVVIGSEVFDRLASASAAGGWAAPPAVAMKQPSTAALLYSSGTTGRVKAVAITHRNLIAQISAYNAIRETVAREAATDAGKGKPPPPSPSPPAAVTLFPLPLFHVMGFGLLTRTISSGETAVVMRRFDLAAAARAVERYRVTKLSAAPPVVVALTKSDEARRRDLSSLVAIVVGGAPLGREVSQRFATVFPSVQIVQSYGLTESTGPVATMAGPEESAAYGSVGRLAPRVQAKIVDTATGEVLGPGRRGELWIRGPVVMKGYVGDPEATAATITPDGWLKTGDLCYFNEDGYLYVVDRLKELIKYKGYQVPPAELEHILQSRPEIADAAVVPYPDEEAGQLPMAFVVRQPGAYLTEQQVMNCVAKHVAPYKKVRRVAFVNAIPKSPAGKILRRELVLQAMASTSRL</sequence>
<gene>
    <name type="primary">4CLL6</name>
    <name type="ordered locus">Os01g0901600</name>
    <name type="ordered locus">LOC_Os01g67540</name>
    <name type="ORF">B1065G12.10</name>
    <name type="ORF">P0551C06.10</name>
</gene>
<feature type="chain" id="PRO_0000351632" description="4-coumarate--CoA ligase-like 6">
    <location>
        <begin position="1"/>
        <end position="598"/>
    </location>
</feature>
<feature type="region of interest" description="SBD1">
    <location>
        <begin position="320"/>
        <end position="389"/>
    </location>
</feature>
<feature type="region of interest" description="SBD2">
    <location>
        <begin position="390"/>
        <end position="454"/>
    </location>
</feature>
<feature type="binding site" evidence="1">
    <location>
        <position position="232"/>
    </location>
    <ligand>
        <name>ATP</name>
        <dbReference type="ChEBI" id="CHEBI:30616"/>
    </ligand>
</feature>
<feature type="binding site" evidence="1">
    <location>
        <position position="233"/>
    </location>
    <ligand>
        <name>ATP</name>
        <dbReference type="ChEBI" id="CHEBI:30616"/>
    </ligand>
</feature>
<feature type="binding site" evidence="1">
    <location>
        <position position="234"/>
    </location>
    <ligand>
        <name>ATP</name>
        <dbReference type="ChEBI" id="CHEBI:30616"/>
    </ligand>
</feature>
<feature type="binding site" evidence="1">
    <location>
        <position position="235"/>
    </location>
    <ligand>
        <name>ATP</name>
        <dbReference type="ChEBI" id="CHEBI:30616"/>
    </ligand>
</feature>
<feature type="binding site" evidence="1">
    <location>
        <position position="236"/>
    </location>
    <ligand>
        <name>ATP</name>
        <dbReference type="ChEBI" id="CHEBI:30616"/>
    </ligand>
</feature>
<feature type="binding site" evidence="1">
    <location>
        <position position="240"/>
    </location>
    <ligand>
        <name>ATP</name>
        <dbReference type="ChEBI" id="CHEBI:30616"/>
    </ligand>
</feature>
<feature type="binding site" evidence="1">
    <location>
        <position position="318"/>
    </location>
    <ligand>
        <name>CoA</name>
        <dbReference type="ChEBI" id="CHEBI:57287"/>
    </ligand>
</feature>
<feature type="binding site" evidence="1">
    <location>
        <position position="367"/>
    </location>
    <ligand>
        <name>(E)-4-coumaroyl-AMP</name>
        <dbReference type="ChEBI" id="CHEBI:192348"/>
    </ligand>
</feature>
<feature type="binding site" evidence="1">
    <location>
        <position position="389"/>
    </location>
    <ligand>
        <name>(E)-4-coumaroyl-AMP</name>
        <dbReference type="ChEBI" id="CHEBI:192348"/>
    </ligand>
</feature>
<feature type="binding site" evidence="1">
    <location>
        <position position="389"/>
    </location>
    <ligand>
        <name>ATP</name>
        <dbReference type="ChEBI" id="CHEBI:30616"/>
    </ligand>
</feature>
<feature type="binding site" evidence="1">
    <location>
        <position position="394"/>
    </location>
    <ligand>
        <name>(E)-4-coumaroyl-AMP</name>
        <dbReference type="ChEBI" id="CHEBI:192348"/>
    </ligand>
</feature>
<feature type="binding site" evidence="1">
    <location>
        <position position="394"/>
    </location>
    <ligand>
        <name>ATP</name>
        <dbReference type="ChEBI" id="CHEBI:30616"/>
    </ligand>
</feature>
<feature type="binding site" evidence="1">
    <location>
        <position position="475"/>
    </location>
    <ligand>
        <name>ATP</name>
        <dbReference type="ChEBI" id="CHEBI:30616"/>
    </ligand>
</feature>
<feature type="binding site" evidence="1">
    <location>
        <position position="490"/>
    </location>
    <ligand>
        <name>ATP</name>
        <dbReference type="ChEBI" id="CHEBI:30616"/>
    </ligand>
</feature>
<feature type="binding site" evidence="1">
    <location>
        <position position="492"/>
    </location>
    <ligand>
        <name>(E)-4-coumaroyl-AMP</name>
        <dbReference type="ChEBI" id="CHEBI:192348"/>
    </ligand>
</feature>
<feature type="binding site" evidence="1">
    <location>
        <position position="496"/>
    </location>
    <ligand>
        <name>(E)-4-coumaroyl-AMP</name>
        <dbReference type="ChEBI" id="CHEBI:192348"/>
    </ligand>
</feature>
<feature type="binding site" evidence="1">
    <location>
        <position position="498"/>
    </location>
    <ligand>
        <name>CoA</name>
        <dbReference type="ChEBI" id="CHEBI:57287"/>
    </ligand>
</feature>
<feature type="binding site" evidence="1">
    <location>
        <position position="499"/>
    </location>
    <ligand>
        <name>CoA</name>
        <dbReference type="ChEBI" id="CHEBI:57287"/>
    </ligand>
</feature>
<feature type="binding site" evidence="1">
    <location>
        <position position="581"/>
    </location>
    <ligand>
        <name>ATP</name>
        <dbReference type="ChEBI" id="CHEBI:30616"/>
    </ligand>
</feature>
<organism>
    <name type="scientific">Oryza sativa subsp. japonica</name>
    <name type="common">Rice</name>
    <dbReference type="NCBI Taxonomy" id="39947"/>
    <lineage>
        <taxon>Eukaryota</taxon>
        <taxon>Viridiplantae</taxon>
        <taxon>Streptophyta</taxon>
        <taxon>Embryophyta</taxon>
        <taxon>Tracheophyta</taxon>
        <taxon>Spermatophyta</taxon>
        <taxon>Magnoliopsida</taxon>
        <taxon>Liliopsida</taxon>
        <taxon>Poales</taxon>
        <taxon>Poaceae</taxon>
        <taxon>BOP clade</taxon>
        <taxon>Oryzoideae</taxon>
        <taxon>Oryzeae</taxon>
        <taxon>Oryzinae</taxon>
        <taxon>Oryza</taxon>
        <taxon>Oryza sativa</taxon>
    </lineage>
</organism>
<proteinExistence type="evidence at transcript level"/>
<protein>
    <recommendedName>
        <fullName>4-coumarate--CoA ligase-like 6</fullName>
        <ecNumber evidence="1">6.2.1.12</ecNumber>
    </recommendedName>
</protein>
<evidence type="ECO:0000250" key="1">
    <source>
        <dbReference type="UniProtKB" id="O24146"/>
    </source>
</evidence>
<evidence type="ECO:0000250" key="2">
    <source>
        <dbReference type="UniProtKB" id="Q42524"/>
    </source>
</evidence>
<evidence type="ECO:0000305" key="3"/>
<accession>Q8RU95</accession>
<accession>A0A0P0VBX5</accession>
<keyword id="KW-0067">ATP-binding</keyword>
<keyword id="KW-0436">Ligase</keyword>
<keyword id="KW-0460">Magnesium</keyword>
<keyword id="KW-0547">Nucleotide-binding</keyword>
<keyword id="KW-1185">Reference proteome</keyword>
<name>4CLL6_ORYSJ</name>
<dbReference type="EC" id="6.2.1.12" evidence="1"/>
<dbReference type="EMBL" id="AP003313">
    <property type="protein sequence ID" value="BAB89961.1"/>
    <property type="status" value="ALT_SEQ"/>
    <property type="molecule type" value="Genomic_DNA"/>
</dbReference>
<dbReference type="EMBL" id="AP003791">
    <property type="protein sequence ID" value="BAB90528.1"/>
    <property type="status" value="ALT_SEQ"/>
    <property type="molecule type" value="Genomic_DNA"/>
</dbReference>
<dbReference type="EMBL" id="AP006757">
    <property type="protein sequence ID" value="BAD82770.1"/>
    <property type="status" value="ALT_SEQ"/>
    <property type="molecule type" value="Genomic_DNA"/>
</dbReference>
<dbReference type="EMBL" id="AP014957">
    <property type="protein sequence ID" value="BAS75754.1"/>
    <property type="molecule type" value="Genomic_DNA"/>
</dbReference>
<dbReference type="EMBL" id="AK241420">
    <property type="status" value="NOT_ANNOTATED_CDS"/>
    <property type="molecule type" value="mRNA"/>
</dbReference>
<dbReference type="SMR" id="Q8RU95"/>
<dbReference type="FunCoup" id="Q8RU95">
    <property type="interactions" value="1293"/>
</dbReference>
<dbReference type="STRING" id="39947.Q8RU95"/>
<dbReference type="PaxDb" id="39947-Q8RU95"/>
<dbReference type="EnsemblPlants" id="Os01t0901600-01">
    <property type="protein sequence ID" value="Os01t0901600-01"/>
    <property type="gene ID" value="Os01g0901600"/>
</dbReference>
<dbReference type="Gramene" id="Os01t0901600-01">
    <property type="protein sequence ID" value="Os01t0901600-01"/>
    <property type="gene ID" value="Os01g0901600"/>
</dbReference>
<dbReference type="eggNOG" id="KOG1176">
    <property type="taxonomic scope" value="Eukaryota"/>
</dbReference>
<dbReference type="HOGENOM" id="CLU_000022_59_2_1"/>
<dbReference type="InParanoid" id="Q8RU95"/>
<dbReference type="OMA" id="HWVNIST"/>
<dbReference type="OrthoDB" id="10253869at2759"/>
<dbReference type="PlantReactome" id="R-OSA-1119316">
    <property type="pathway name" value="Phenylpropanoid biosynthesis"/>
</dbReference>
<dbReference type="PlantReactome" id="R-OSA-1119531">
    <property type="pathway name" value="Flavonoid biosynthesis"/>
</dbReference>
<dbReference type="Proteomes" id="UP000000763">
    <property type="component" value="Chromosome 1"/>
</dbReference>
<dbReference type="Proteomes" id="UP000059680">
    <property type="component" value="Chromosome 1"/>
</dbReference>
<dbReference type="GO" id="GO:0016207">
    <property type="term" value="F:4-coumarate-CoA ligase activity"/>
    <property type="evidence" value="ECO:0007669"/>
    <property type="project" value="UniProtKB-ARBA"/>
</dbReference>
<dbReference type="GO" id="GO:0005524">
    <property type="term" value="F:ATP binding"/>
    <property type="evidence" value="ECO:0007669"/>
    <property type="project" value="UniProtKB-KW"/>
</dbReference>
<dbReference type="GO" id="GO:0016405">
    <property type="term" value="F:CoA-ligase activity"/>
    <property type="evidence" value="ECO:0000318"/>
    <property type="project" value="GO_Central"/>
</dbReference>
<dbReference type="GO" id="GO:0106290">
    <property type="term" value="F:trans-cinnamate-CoA ligase activity"/>
    <property type="evidence" value="ECO:0007669"/>
    <property type="project" value="UniProtKB-ARBA"/>
</dbReference>
<dbReference type="GO" id="GO:0009698">
    <property type="term" value="P:phenylpropanoid metabolic process"/>
    <property type="evidence" value="ECO:0007669"/>
    <property type="project" value="UniProtKB-ARBA"/>
</dbReference>
<dbReference type="CDD" id="cd05904">
    <property type="entry name" value="4CL"/>
    <property type="match status" value="1"/>
</dbReference>
<dbReference type="FunFam" id="3.30.300.30:FF:000007">
    <property type="entry name" value="4-coumarate--CoA ligase 2"/>
    <property type="match status" value="1"/>
</dbReference>
<dbReference type="Gene3D" id="3.30.300.30">
    <property type="match status" value="1"/>
</dbReference>
<dbReference type="Gene3D" id="3.40.50.12780">
    <property type="entry name" value="N-terminal domain of ligase-like"/>
    <property type="match status" value="1"/>
</dbReference>
<dbReference type="InterPro" id="IPR025110">
    <property type="entry name" value="AMP-bd_C"/>
</dbReference>
<dbReference type="InterPro" id="IPR045851">
    <property type="entry name" value="AMP-bd_C_sf"/>
</dbReference>
<dbReference type="InterPro" id="IPR020845">
    <property type="entry name" value="AMP-binding_CS"/>
</dbReference>
<dbReference type="InterPro" id="IPR000873">
    <property type="entry name" value="AMP-dep_synth/lig_dom"/>
</dbReference>
<dbReference type="InterPro" id="IPR042099">
    <property type="entry name" value="ANL_N_sf"/>
</dbReference>
<dbReference type="PANTHER" id="PTHR24096:SF251">
    <property type="entry name" value="4-COUMARATE--COA LIGASE-LIKE 9"/>
    <property type="match status" value="1"/>
</dbReference>
<dbReference type="PANTHER" id="PTHR24096">
    <property type="entry name" value="LONG-CHAIN-FATTY-ACID--COA LIGASE"/>
    <property type="match status" value="1"/>
</dbReference>
<dbReference type="Pfam" id="PF00501">
    <property type="entry name" value="AMP-binding"/>
    <property type="match status" value="1"/>
</dbReference>
<dbReference type="Pfam" id="PF13193">
    <property type="entry name" value="AMP-binding_C"/>
    <property type="match status" value="1"/>
</dbReference>
<dbReference type="SUPFAM" id="SSF56801">
    <property type="entry name" value="Acetyl-CoA synthetase-like"/>
    <property type="match status" value="1"/>
</dbReference>
<dbReference type="PROSITE" id="PS00455">
    <property type="entry name" value="AMP_BINDING"/>
    <property type="match status" value="1"/>
</dbReference>